<comment type="function">
    <text evidence="1">Na(+)/H(+) antiporter that extrudes sodium in exchange for external protons.</text>
</comment>
<comment type="catalytic activity">
    <reaction evidence="1">
        <text>Na(+)(in) + 2 H(+)(out) = Na(+)(out) + 2 H(+)(in)</text>
        <dbReference type="Rhea" id="RHEA:29251"/>
        <dbReference type="ChEBI" id="CHEBI:15378"/>
        <dbReference type="ChEBI" id="CHEBI:29101"/>
    </reaction>
    <physiologicalReaction direction="left-to-right" evidence="1">
        <dbReference type="Rhea" id="RHEA:29252"/>
    </physiologicalReaction>
</comment>
<comment type="subcellular location">
    <subcellularLocation>
        <location evidence="1">Cell inner membrane</location>
        <topology evidence="1">Multi-pass membrane protein</topology>
    </subcellularLocation>
</comment>
<comment type="similarity">
    <text evidence="2">In the N-terminal section; belongs to the NhaA Na(+)/H(+) (TC 2.A.33) antiporter family.</text>
</comment>
<comment type="similarity">
    <text evidence="2">In the C-terminal section; belongs to the peptidase S49 family.</text>
</comment>
<comment type="sequence caution" evidence="2">
    <conflict type="erroneous initiation">
        <sequence resource="EMBL-CDS" id="CAJ10381"/>
    </conflict>
</comment>
<organism>
    <name type="scientific">Brucella abortus (strain 2308)</name>
    <dbReference type="NCBI Taxonomy" id="359391"/>
    <lineage>
        <taxon>Bacteria</taxon>
        <taxon>Pseudomonadati</taxon>
        <taxon>Pseudomonadota</taxon>
        <taxon>Alphaproteobacteria</taxon>
        <taxon>Hyphomicrobiales</taxon>
        <taxon>Brucellaceae</taxon>
        <taxon>Brucella/Ochrobactrum group</taxon>
        <taxon>Brucella</taxon>
    </lineage>
</organism>
<feature type="chain" id="PRO_0000334475" description="Na(+)/H(+) antiporter NhaA">
    <location>
        <begin position="1"/>
        <end position="736"/>
    </location>
</feature>
<feature type="transmembrane region" description="Helical" evidence="1">
    <location>
        <begin position="23"/>
        <end position="43"/>
    </location>
</feature>
<feature type="transmembrane region" description="Helical" evidence="1">
    <location>
        <begin position="58"/>
        <end position="78"/>
    </location>
</feature>
<feature type="transmembrane region" description="Helical" evidence="1">
    <location>
        <begin position="96"/>
        <end position="116"/>
    </location>
</feature>
<feature type="transmembrane region" description="Helical" evidence="1">
    <location>
        <begin position="126"/>
        <end position="146"/>
    </location>
</feature>
<feature type="transmembrane region" description="Helical" evidence="1">
    <location>
        <begin position="155"/>
        <end position="175"/>
    </location>
</feature>
<feature type="transmembrane region" description="Helical" evidence="1">
    <location>
        <begin position="178"/>
        <end position="198"/>
    </location>
</feature>
<feature type="transmembrane region" description="Helical" evidence="1">
    <location>
        <begin position="201"/>
        <end position="221"/>
    </location>
</feature>
<feature type="transmembrane region" description="Helical" evidence="1">
    <location>
        <begin position="224"/>
        <end position="244"/>
    </location>
</feature>
<feature type="transmembrane region" description="Helical" evidence="1">
    <location>
        <begin position="265"/>
        <end position="285"/>
    </location>
</feature>
<feature type="transmembrane region" description="Helical" evidence="1">
    <location>
        <begin position="298"/>
        <end position="318"/>
    </location>
</feature>
<feature type="transmembrane region" description="Helical" evidence="1">
    <location>
        <begin position="334"/>
        <end position="354"/>
    </location>
</feature>
<feature type="transmembrane region" description="Helical" evidence="1">
    <location>
        <begin position="367"/>
        <end position="387"/>
    </location>
</feature>
<feature type="region of interest" description="Na(+)/H(+) antiporter NhaA">
    <location>
        <begin position="1"/>
        <end position="387"/>
    </location>
</feature>
<feature type="region of interest" description="Peptidase S49">
    <location>
        <begin position="388"/>
        <end position="736"/>
    </location>
</feature>
<keyword id="KW-0050">Antiport</keyword>
<keyword id="KW-0997">Cell inner membrane</keyword>
<keyword id="KW-1003">Cell membrane</keyword>
<keyword id="KW-0406">Ion transport</keyword>
<keyword id="KW-0472">Membrane</keyword>
<keyword id="KW-1185">Reference proteome</keyword>
<keyword id="KW-0915">Sodium</keyword>
<keyword id="KW-0739">Sodium transport</keyword>
<keyword id="KW-0812">Transmembrane</keyword>
<keyword id="KW-1133">Transmembrane helix</keyword>
<keyword id="KW-0813">Transport</keyword>
<name>NHAA_BRUA2</name>
<proteinExistence type="inferred from homology"/>
<sequence>MNHSPQSARPVSIMRRFLDSEAAGGITLMAAAALALIVANSPFAQTYFDALHLYIGPLSLAHWINDALMAIFFLLVGLEIKREMLDGQLASWPNRMLPGIAAAGGVILPAIIFAVLNHDNPAKLRGWAVPSATDIAFALGVLSLLGSRAPSSLKVFLATLAILDDLAAVVIIAIFYTAEISMPYLGAAFITAAVLFVMNRMGVVKLLPYLISAVILWFFVFNSGVHATVAGVVAALMIPLKPAPGRPDDMTSPLHKLEHALAKPVAFIVVPIFGFANAGISFKGLEASVLGDTLTLGILLGLFLGKQFGVFGAAWLAIKTGLAEKPMGASWVQLYGVAILCGIGFTMSIFIGLLSFPSDLMQTETKIGVLSGSALSAICGYLLLRAARPDQSAANPLWKADESPEAKNFGRFLCVFHFASYIASTYCTERLQAASSLLRRSSLEFALPGLLKRLIPRRFRAVETEIPVVRLHGAIMTGGTSLRPTLSLASTAGILEKAFADKHAPAVAISINSPGGAPVQSRLIYRRIRDLAVEHQKKVFVFVEDVAASGGYMIALAGDEIIADPSSIVGSIGVVSASFGFPELLKKIGVERRVYTAGSNKVTLDPFQPEKAEDIERLKALQLEIHATFIDMVKERRAGKLGDNPDLFSGLFWTGTTAASLGLIDGLGDMRSFLRKTYGDKVKLKLIQPQRGLLGRKLPGIGMDSGSVEPAQIAAHLGDGLLCVAEEKAIWARYGL</sequence>
<accession>Q2YMB3</accession>
<protein>
    <recommendedName>
        <fullName evidence="1">Na(+)/H(+) antiporter NhaA</fullName>
    </recommendedName>
    <alternativeName>
        <fullName evidence="1">Sodium/proton antiporter NhaA</fullName>
    </alternativeName>
</protein>
<reference key="1">
    <citation type="journal article" date="2005" name="Infect. Immun.">
        <title>Whole-genome analyses of speciation events in pathogenic Brucellae.</title>
        <authorList>
            <person name="Chain P.S."/>
            <person name="Comerci D.J."/>
            <person name="Tolmasky M.E."/>
            <person name="Larimer F.W."/>
            <person name="Malfatti S.A."/>
            <person name="Vergez L.M."/>
            <person name="Aguero F."/>
            <person name="Land M.L."/>
            <person name="Ugalde R.A."/>
            <person name="Garcia E."/>
        </authorList>
    </citation>
    <scope>NUCLEOTIDE SEQUENCE [LARGE SCALE GENOMIC DNA]</scope>
    <source>
        <strain>2308</strain>
    </source>
</reference>
<dbReference type="EMBL" id="AM040264">
    <property type="protein sequence ID" value="CAJ10381.1"/>
    <property type="status" value="ALT_INIT"/>
    <property type="molecule type" value="Genomic_DNA"/>
</dbReference>
<dbReference type="SMR" id="Q2YMB3"/>
<dbReference type="STRING" id="359391.BAB1_0425"/>
<dbReference type="KEGG" id="bmf:BAB1_0425"/>
<dbReference type="HOGENOM" id="CLU_020970_0_0_5"/>
<dbReference type="PhylomeDB" id="Q2YMB3"/>
<dbReference type="Proteomes" id="UP000002719">
    <property type="component" value="Chromosome I"/>
</dbReference>
<dbReference type="GO" id="GO:0005886">
    <property type="term" value="C:plasma membrane"/>
    <property type="evidence" value="ECO:0007669"/>
    <property type="project" value="UniProtKB-SubCell"/>
</dbReference>
<dbReference type="GO" id="GO:0008233">
    <property type="term" value="F:peptidase activity"/>
    <property type="evidence" value="ECO:0007669"/>
    <property type="project" value="InterPro"/>
</dbReference>
<dbReference type="GO" id="GO:0015385">
    <property type="term" value="F:sodium:proton antiporter activity"/>
    <property type="evidence" value="ECO:0007669"/>
    <property type="project" value="TreeGrafter"/>
</dbReference>
<dbReference type="GO" id="GO:0006508">
    <property type="term" value="P:proteolysis"/>
    <property type="evidence" value="ECO:0007669"/>
    <property type="project" value="InterPro"/>
</dbReference>
<dbReference type="GO" id="GO:0006885">
    <property type="term" value="P:regulation of pH"/>
    <property type="evidence" value="ECO:0007669"/>
    <property type="project" value="InterPro"/>
</dbReference>
<dbReference type="CDD" id="cd07023">
    <property type="entry name" value="S49_Sppa_N_C"/>
    <property type="match status" value="1"/>
</dbReference>
<dbReference type="Gene3D" id="6.20.330.10">
    <property type="match status" value="1"/>
</dbReference>
<dbReference type="Gene3D" id="3.90.226.10">
    <property type="entry name" value="2-enoyl-CoA Hydratase, Chain A, domain 1"/>
    <property type="match status" value="1"/>
</dbReference>
<dbReference type="Gene3D" id="1.20.1530.10">
    <property type="entry name" value="Na+/H+ antiporter like domain"/>
    <property type="match status" value="1"/>
</dbReference>
<dbReference type="HAMAP" id="MF_01844">
    <property type="entry name" value="NhaA"/>
    <property type="match status" value="1"/>
</dbReference>
<dbReference type="InterPro" id="IPR029045">
    <property type="entry name" value="ClpP/crotonase-like_dom_sf"/>
</dbReference>
<dbReference type="InterPro" id="IPR023171">
    <property type="entry name" value="Na/H_antiporter_dom_sf"/>
</dbReference>
<dbReference type="InterPro" id="IPR004670">
    <property type="entry name" value="NhaA"/>
</dbReference>
<dbReference type="InterPro" id="IPR002142">
    <property type="entry name" value="Peptidase_S49"/>
</dbReference>
<dbReference type="InterPro" id="IPR047272">
    <property type="entry name" value="S49_SppA_C"/>
</dbReference>
<dbReference type="NCBIfam" id="TIGR00773">
    <property type="entry name" value="NhaA"/>
    <property type="match status" value="1"/>
</dbReference>
<dbReference type="NCBIfam" id="NF007111">
    <property type="entry name" value="PRK09560.1"/>
    <property type="match status" value="1"/>
</dbReference>
<dbReference type="NCBIfam" id="NF007112">
    <property type="entry name" value="PRK09561.1"/>
    <property type="match status" value="1"/>
</dbReference>
<dbReference type="PANTHER" id="PTHR30341:SF0">
    <property type="entry name" value="NA(+)_H(+) ANTIPORTER NHAA"/>
    <property type="match status" value="1"/>
</dbReference>
<dbReference type="PANTHER" id="PTHR30341">
    <property type="entry name" value="SODIUM ION/PROTON ANTIPORTER NHAA-RELATED"/>
    <property type="match status" value="1"/>
</dbReference>
<dbReference type="Pfam" id="PF06965">
    <property type="entry name" value="Na_H_antiport_1"/>
    <property type="match status" value="1"/>
</dbReference>
<dbReference type="Pfam" id="PF01343">
    <property type="entry name" value="Peptidase_S49"/>
    <property type="match status" value="1"/>
</dbReference>
<dbReference type="SUPFAM" id="SSF52096">
    <property type="entry name" value="ClpP/crotonase"/>
    <property type="match status" value="1"/>
</dbReference>
<evidence type="ECO:0000255" key="1">
    <source>
        <dbReference type="HAMAP-Rule" id="MF_01844"/>
    </source>
</evidence>
<evidence type="ECO:0000305" key="2"/>
<gene>
    <name evidence="1" type="primary">nhaA</name>
    <name type="ordered locus">BAB1_0425</name>
</gene>